<evidence type="ECO:0000255" key="1"/>
<evidence type="ECO:0000305" key="2"/>
<organism>
    <name type="scientific">Rickettsia typhi (strain ATCC VR-144 / Wilmington)</name>
    <dbReference type="NCBI Taxonomy" id="257363"/>
    <lineage>
        <taxon>Bacteria</taxon>
        <taxon>Pseudomonadati</taxon>
        <taxon>Pseudomonadota</taxon>
        <taxon>Alphaproteobacteria</taxon>
        <taxon>Rickettsiales</taxon>
        <taxon>Rickettsiaceae</taxon>
        <taxon>Rickettsieae</taxon>
        <taxon>Rickettsia</taxon>
        <taxon>typhus group</taxon>
    </lineage>
</organism>
<sequence length="405" mass="46583">MQYLILSLIFLIPSLGMLTGLSIAATVLFFLLIIVITELISFIRKQEFSKKFLIKLYPRFGFDDIFCVKNRIKTELLFIAWCFISCLFTIHPINSLVTFTKVFALLFLRFVNNVVTFQNILYLKNSLILGIITAILLFFIEYSSHGFLTRMFKTHFGLYMLDRGCALLSITTWVVIIILFSNGKNINAFILYIVVLYLLSISDSLASFVGFSIGGIIFILARLIKKIFFKLITISLITGSLLFPIIAKQIDPHNLSEKYLATKPSAAHRLFIWHFVANKIIIKPILGYGFASSKYIKTSDNEMIDYRGEKLHPLPLHPHNNILQITLELGILGLALFLCLVYKYLKEIDNIKISNFRAASYSCFINYYIIGMISYNIWQTWWILSGIWILVLMKLLVKPDIIIDN</sequence>
<gene>
    <name type="ordered locus">RT0347</name>
</gene>
<accession>Q68X15</accession>
<name>Y347_RICTY</name>
<protein>
    <recommendedName>
        <fullName>Putative polysaccharide ligase RT0347</fullName>
    </recommendedName>
</protein>
<feature type="chain" id="PRO_0000280993" description="Putative polysaccharide ligase RT0347">
    <location>
        <begin position="1"/>
        <end position="405"/>
    </location>
</feature>
<feature type="transmembrane region" description="Helical" evidence="1">
    <location>
        <begin position="23"/>
        <end position="43"/>
    </location>
</feature>
<feature type="transmembrane region" description="Helical" evidence="1">
    <location>
        <begin position="77"/>
        <end position="97"/>
    </location>
</feature>
<feature type="transmembrane region" description="Helical" evidence="1">
    <location>
        <begin position="120"/>
        <end position="140"/>
    </location>
</feature>
<feature type="transmembrane region" description="Helical" evidence="1">
    <location>
        <begin position="156"/>
        <end position="178"/>
    </location>
</feature>
<feature type="transmembrane region" description="Helical" evidence="1">
    <location>
        <begin position="201"/>
        <end position="221"/>
    </location>
</feature>
<feature type="transmembrane region" description="Helical" evidence="1">
    <location>
        <begin position="227"/>
        <end position="247"/>
    </location>
</feature>
<feature type="transmembrane region" description="Helical" evidence="1">
    <location>
        <begin position="270"/>
        <end position="290"/>
    </location>
</feature>
<feature type="transmembrane region" description="Helical" evidence="1">
    <location>
        <begin position="322"/>
        <end position="342"/>
    </location>
</feature>
<feature type="transmembrane region" description="Helical" evidence="1">
    <location>
        <begin position="353"/>
        <end position="375"/>
    </location>
</feature>
<feature type="transmembrane region" description="Helical" evidence="1">
    <location>
        <begin position="377"/>
        <end position="397"/>
    </location>
</feature>
<dbReference type="EMBL" id="AE017197">
    <property type="protein sequence ID" value="AAU03827.1"/>
    <property type="molecule type" value="Genomic_DNA"/>
</dbReference>
<dbReference type="RefSeq" id="WP_011190811.1">
    <property type="nucleotide sequence ID" value="NC_006142.1"/>
</dbReference>
<dbReference type="KEGG" id="rty:RT0347"/>
<dbReference type="eggNOG" id="COG3307">
    <property type="taxonomic scope" value="Bacteria"/>
</dbReference>
<dbReference type="HOGENOM" id="CLU_668825_0_0_5"/>
<dbReference type="OrthoDB" id="8050531at2"/>
<dbReference type="Proteomes" id="UP000000604">
    <property type="component" value="Chromosome"/>
</dbReference>
<dbReference type="GO" id="GO:0016020">
    <property type="term" value="C:membrane"/>
    <property type="evidence" value="ECO:0007669"/>
    <property type="project" value="UniProtKB-SubCell"/>
</dbReference>
<dbReference type="InterPro" id="IPR007016">
    <property type="entry name" value="O-antigen_ligase-rel_domated"/>
</dbReference>
<dbReference type="InterPro" id="IPR051533">
    <property type="entry name" value="WaaL-like"/>
</dbReference>
<dbReference type="PANTHER" id="PTHR37422:SF13">
    <property type="entry name" value="LIPOPOLYSACCHARIDE BIOSYNTHESIS PROTEIN PA4999-RELATED"/>
    <property type="match status" value="1"/>
</dbReference>
<dbReference type="PANTHER" id="PTHR37422">
    <property type="entry name" value="TEICHURONIC ACID BIOSYNTHESIS PROTEIN TUAE"/>
    <property type="match status" value="1"/>
</dbReference>
<dbReference type="Pfam" id="PF04932">
    <property type="entry name" value="Wzy_C"/>
    <property type="match status" value="1"/>
</dbReference>
<proteinExistence type="inferred from homology"/>
<keyword id="KW-0472">Membrane</keyword>
<keyword id="KW-0812">Transmembrane</keyword>
<keyword id="KW-1133">Transmembrane helix</keyword>
<comment type="subcellular location">
    <subcellularLocation>
        <location evidence="2">Membrane</location>
        <topology evidence="2">Multi-pass membrane protein</topology>
    </subcellularLocation>
</comment>
<comment type="similarity">
    <text evidence="2">Belongs to the O-antigen ligase family.</text>
</comment>
<reference key="1">
    <citation type="journal article" date="2004" name="J. Bacteriol.">
        <title>Complete genome sequence of Rickettsia typhi and comparison with sequences of other Rickettsiae.</title>
        <authorList>
            <person name="McLeod M.P."/>
            <person name="Qin X."/>
            <person name="Karpathy S.E."/>
            <person name="Gioia J."/>
            <person name="Highlander S.K."/>
            <person name="Fox G.E."/>
            <person name="McNeill T.Z."/>
            <person name="Jiang H."/>
            <person name="Muzny D."/>
            <person name="Jacob L.S."/>
            <person name="Hawes A.C."/>
            <person name="Sodergren E."/>
            <person name="Gill R."/>
            <person name="Hume J."/>
            <person name="Morgan M."/>
            <person name="Fan G."/>
            <person name="Amin A.G."/>
            <person name="Gibbs R.A."/>
            <person name="Hong C."/>
            <person name="Yu X.-J."/>
            <person name="Walker D.H."/>
            <person name="Weinstock G.M."/>
        </authorList>
    </citation>
    <scope>NUCLEOTIDE SEQUENCE [LARGE SCALE GENOMIC DNA]</scope>
    <source>
        <strain>ATCC VR-144 / Wilmington</strain>
    </source>
</reference>